<feature type="chain" id="PRO_0000161187" description="Elongation factor Ts">
    <location>
        <begin position="1"/>
        <end position="309"/>
    </location>
</feature>
<feature type="region of interest" description="Involved in Mg(2+) ion dislocation from EF-Tu" evidence="1">
    <location>
        <begin position="82"/>
        <end position="85"/>
    </location>
</feature>
<keyword id="KW-0963">Cytoplasm</keyword>
<keyword id="KW-0251">Elongation factor</keyword>
<keyword id="KW-0648">Protein biosynthesis</keyword>
<protein>
    <recommendedName>
        <fullName evidence="1">Elongation factor Ts</fullName>
        <shortName evidence="1">EF-Ts</shortName>
    </recommendedName>
</protein>
<sequence>MSEINISAAAVKELREKTGAGMMDCKKALIETSGNFEEAIDFLRKKGLAAAVKKFGRIASEGLTAIKINGLTSVVIEVNSETDFVARNEQFQNLVKDIVNLAIIAQNIDALKISKMQSGKSVEEEIIENIATIGENLTLRRMDILEISNGAIGSYVHNEVVPHLGKISVLVGLESNAKDKAKLAALAKQIAVHVAGNNPQSIDTLSLDQALVERERKVFFEKSKEEGKPDHIIEKMVEGRIRKFFSEVVLLQQNFLFEPKLTVAEVIKNAEQELGAEIKITKFIRYALGEGIEHEEKNFADEVASITKC</sequence>
<evidence type="ECO:0000255" key="1">
    <source>
        <dbReference type="HAMAP-Rule" id="MF_00050"/>
    </source>
</evidence>
<proteinExistence type="inferred from homology"/>
<gene>
    <name evidence="1" type="primary">tsf</name>
    <name type="ordered locus">RT0049</name>
</gene>
<accession>Q68XV6</accession>
<name>EFTS_RICTY</name>
<reference key="1">
    <citation type="journal article" date="2004" name="J. Bacteriol.">
        <title>Complete genome sequence of Rickettsia typhi and comparison with sequences of other Rickettsiae.</title>
        <authorList>
            <person name="McLeod M.P."/>
            <person name="Qin X."/>
            <person name="Karpathy S.E."/>
            <person name="Gioia J."/>
            <person name="Highlander S.K."/>
            <person name="Fox G.E."/>
            <person name="McNeill T.Z."/>
            <person name="Jiang H."/>
            <person name="Muzny D."/>
            <person name="Jacob L.S."/>
            <person name="Hawes A.C."/>
            <person name="Sodergren E."/>
            <person name="Gill R."/>
            <person name="Hume J."/>
            <person name="Morgan M."/>
            <person name="Fan G."/>
            <person name="Amin A.G."/>
            <person name="Gibbs R.A."/>
            <person name="Hong C."/>
            <person name="Yu X.-J."/>
            <person name="Walker D.H."/>
            <person name="Weinstock G.M."/>
        </authorList>
    </citation>
    <scope>NUCLEOTIDE SEQUENCE [LARGE SCALE GENOMIC DNA]</scope>
    <source>
        <strain>ATCC VR-144 / Wilmington</strain>
    </source>
</reference>
<organism>
    <name type="scientific">Rickettsia typhi (strain ATCC VR-144 / Wilmington)</name>
    <dbReference type="NCBI Taxonomy" id="257363"/>
    <lineage>
        <taxon>Bacteria</taxon>
        <taxon>Pseudomonadati</taxon>
        <taxon>Pseudomonadota</taxon>
        <taxon>Alphaproteobacteria</taxon>
        <taxon>Rickettsiales</taxon>
        <taxon>Rickettsiaceae</taxon>
        <taxon>Rickettsieae</taxon>
        <taxon>Rickettsia</taxon>
        <taxon>typhus group</taxon>
    </lineage>
</organism>
<comment type="function">
    <text evidence="1">Associates with the EF-Tu.GDP complex and induces the exchange of GDP to GTP. It remains bound to the aminoacyl-tRNA.EF-Tu.GTP complex up to the GTP hydrolysis stage on the ribosome.</text>
</comment>
<comment type="subcellular location">
    <subcellularLocation>
        <location evidence="1">Cytoplasm</location>
    </subcellularLocation>
</comment>
<comment type="similarity">
    <text evidence="1">Belongs to the EF-Ts family.</text>
</comment>
<dbReference type="EMBL" id="AE017197">
    <property type="protein sequence ID" value="AAU03536.1"/>
    <property type="molecule type" value="Genomic_DNA"/>
</dbReference>
<dbReference type="RefSeq" id="WP_011190523.1">
    <property type="nucleotide sequence ID" value="NC_006142.1"/>
</dbReference>
<dbReference type="SMR" id="Q68XV6"/>
<dbReference type="KEGG" id="rty:RT0049"/>
<dbReference type="eggNOG" id="COG0264">
    <property type="taxonomic scope" value="Bacteria"/>
</dbReference>
<dbReference type="HOGENOM" id="CLU_047155_2_0_5"/>
<dbReference type="OrthoDB" id="9808348at2"/>
<dbReference type="Proteomes" id="UP000000604">
    <property type="component" value="Chromosome"/>
</dbReference>
<dbReference type="GO" id="GO:0005737">
    <property type="term" value="C:cytoplasm"/>
    <property type="evidence" value="ECO:0007669"/>
    <property type="project" value="UniProtKB-SubCell"/>
</dbReference>
<dbReference type="GO" id="GO:0003746">
    <property type="term" value="F:translation elongation factor activity"/>
    <property type="evidence" value="ECO:0007669"/>
    <property type="project" value="UniProtKB-UniRule"/>
</dbReference>
<dbReference type="CDD" id="cd14275">
    <property type="entry name" value="UBA_EF-Ts"/>
    <property type="match status" value="1"/>
</dbReference>
<dbReference type="FunFam" id="1.10.286.20:FF:000001">
    <property type="entry name" value="Elongation factor Ts"/>
    <property type="match status" value="1"/>
</dbReference>
<dbReference type="FunFam" id="1.10.8.10:FF:000001">
    <property type="entry name" value="Elongation factor Ts"/>
    <property type="match status" value="1"/>
</dbReference>
<dbReference type="Gene3D" id="1.10.286.20">
    <property type="match status" value="1"/>
</dbReference>
<dbReference type="Gene3D" id="1.10.8.10">
    <property type="entry name" value="DNA helicase RuvA subunit, C-terminal domain"/>
    <property type="match status" value="1"/>
</dbReference>
<dbReference type="Gene3D" id="3.30.479.20">
    <property type="entry name" value="Elongation factor Ts, dimerisation domain"/>
    <property type="match status" value="2"/>
</dbReference>
<dbReference type="HAMAP" id="MF_00050">
    <property type="entry name" value="EF_Ts"/>
    <property type="match status" value="1"/>
</dbReference>
<dbReference type="InterPro" id="IPR036402">
    <property type="entry name" value="EF-Ts_dimer_sf"/>
</dbReference>
<dbReference type="InterPro" id="IPR001816">
    <property type="entry name" value="Transl_elong_EFTs/EF1B"/>
</dbReference>
<dbReference type="InterPro" id="IPR014039">
    <property type="entry name" value="Transl_elong_EFTs/EF1B_dimer"/>
</dbReference>
<dbReference type="InterPro" id="IPR018101">
    <property type="entry name" value="Transl_elong_Ts_CS"/>
</dbReference>
<dbReference type="InterPro" id="IPR009060">
    <property type="entry name" value="UBA-like_sf"/>
</dbReference>
<dbReference type="NCBIfam" id="TIGR00116">
    <property type="entry name" value="tsf"/>
    <property type="match status" value="1"/>
</dbReference>
<dbReference type="PANTHER" id="PTHR11741">
    <property type="entry name" value="ELONGATION FACTOR TS"/>
    <property type="match status" value="1"/>
</dbReference>
<dbReference type="PANTHER" id="PTHR11741:SF0">
    <property type="entry name" value="ELONGATION FACTOR TS, MITOCHONDRIAL"/>
    <property type="match status" value="1"/>
</dbReference>
<dbReference type="Pfam" id="PF00889">
    <property type="entry name" value="EF_TS"/>
    <property type="match status" value="1"/>
</dbReference>
<dbReference type="SUPFAM" id="SSF54713">
    <property type="entry name" value="Elongation factor Ts (EF-Ts), dimerisation domain"/>
    <property type="match status" value="1"/>
</dbReference>
<dbReference type="SUPFAM" id="SSF46934">
    <property type="entry name" value="UBA-like"/>
    <property type="match status" value="1"/>
</dbReference>
<dbReference type="PROSITE" id="PS01126">
    <property type="entry name" value="EF_TS_1"/>
    <property type="match status" value="1"/>
</dbReference>
<dbReference type="PROSITE" id="PS01127">
    <property type="entry name" value="EF_TS_2"/>
    <property type="match status" value="1"/>
</dbReference>